<name>RR11_OLIPU</name>
<gene>
    <name evidence="1" type="primary">rps11</name>
</gene>
<accession>A4QJW4</accession>
<dbReference type="EMBL" id="AP009368">
    <property type="protein sequence ID" value="BAF49972.1"/>
    <property type="molecule type" value="Genomic_DNA"/>
</dbReference>
<dbReference type="RefSeq" id="YP_001123148.1">
    <property type="nucleotide sequence ID" value="NC_009267.1"/>
</dbReference>
<dbReference type="SMR" id="A4QJW4"/>
<dbReference type="GeneID" id="4962358"/>
<dbReference type="GO" id="GO:0009507">
    <property type="term" value="C:chloroplast"/>
    <property type="evidence" value="ECO:0007669"/>
    <property type="project" value="UniProtKB-SubCell"/>
</dbReference>
<dbReference type="GO" id="GO:1990904">
    <property type="term" value="C:ribonucleoprotein complex"/>
    <property type="evidence" value="ECO:0007669"/>
    <property type="project" value="UniProtKB-KW"/>
</dbReference>
<dbReference type="GO" id="GO:0005840">
    <property type="term" value="C:ribosome"/>
    <property type="evidence" value="ECO:0007669"/>
    <property type="project" value="UniProtKB-KW"/>
</dbReference>
<dbReference type="GO" id="GO:0019843">
    <property type="term" value="F:rRNA binding"/>
    <property type="evidence" value="ECO:0007669"/>
    <property type="project" value="UniProtKB-UniRule"/>
</dbReference>
<dbReference type="GO" id="GO:0003735">
    <property type="term" value="F:structural constituent of ribosome"/>
    <property type="evidence" value="ECO:0007669"/>
    <property type="project" value="InterPro"/>
</dbReference>
<dbReference type="GO" id="GO:0006412">
    <property type="term" value="P:translation"/>
    <property type="evidence" value="ECO:0007669"/>
    <property type="project" value="UniProtKB-UniRule"/>
</dbReference>
<dbReference type="FunFam" id="3.30.420.80:FF:000003">
    <property type="entry name" value="30S ribosomal protein S11, chloroplastic"/>
    <property type="match status" value="1"/>
</dbReference>
<dbReference type="Gene3D" id="3.30.420.80">
    <property type="entry name" value="Ribosomal protein S11"/>
    <property type="match status" value="1"/>
</dbReference>
<dbReference type="HAMAP" id="MF_01310">
    <property type="entry name" value="Ribosomal_uS11"/>
    <property type="match status" value="1"/>
</dbReference>
<dbReference type="InterPro" id="IPR001971">
    <property type="entry name" value="Ribosomal_uS11"/>
</dbReference>
<dbReference type="InterPro" id="IPR019981">
    <property type="entry name" value="Ribosomal_uS11_bac-type"/>
</dbReference>
<dbReference type="InterPro" id="IPR018102">
    <property type="entry name" value="Ribosomal_uS11_CS"/>
</dbReference>
<dbReference type="InterPro" id="IPR036967">
    <property type="entry name" value="Ribosomal_uS11_sf"/>
</dbReference>
<dbReference type="NCBIfam" id="NF003698">
    <property type="entry name" value="PRK05309.1"/>
    <property type="match status" value="1"/>
</dbReference>
<dbReference type="NCBIfam" id="TIGR03632">
    <property type="entry name" value="uS11_bact"/>
    <property type="match status" value="1"/>
</dbReference>
<dbReference type="PANTHER" id="PTHR11759">
    <property type="entry name" value="40S RIBOSOMAL PROTEIN S14/30S RIBOSOMAL PROTEIN S11"/>
    <property type="match status" value="1"/>
</dbReference>
<dbReference type="Pfam" id="PF00411">
    <property type="entry name" value="Ribosomal_S11"/>
    <property type="match status" value="1"/>
</dbReference>
<dbReference type="PIRSF" id="PIRSF002131">
    <property type="entry name" value="Ribosomal_S11"/>
    <property type="match status" value="1"/>
</dbReference>
<dbReference type="SUPFAM" id="SSF53137">
    <property type="entry name" value="Translational machinery components"/>
    <property type="match status" value="1"/>
</dbReference>
<dbReference type="PROSITE" id="PS00054">
    <property type="entry name" value="RIBOSOMAL_S11"/>
    <property type="match status" value="1"/>
</dbReference>
<sequence length="138" mass="15024">MAKPILRIGSRKNTRSGSRKNVRRIPKGVIHVQASFNNTIVTVTDVRGRVISWSSAGTCGFRGTRRGTPFAAQTAAGNAIRAVVDQGMQRAEVRIKGPGLGRDAALRAIRRSGILLSFVRDVTPMPHNGCRPPKKRRV</sequence>
<comment type="subunit">
    <text evidence="1">Part of the 30S ribosomal subunit.</text>
</comment>
<comment type="subcellular location">
    <subcellularLocation>
        <location>Plastid</location>
        <location>Chloroplast</location>
    </subcellularLocation>
</comment>
<comment type="similarity">
    <text evidence="1">Belongs to the universal ribosomal protein uS11 family.</text>
</comment>
<keyword id="KW-0150">Chloroplast</keyword>
<keyword id="KW-0934">Plastid</keyword>
<keyword id="KW-0687">Ribonucleoprotein</keyword>
<keyword id="KW-0689">Ribosomal protein</keyword>
<keyword id="KW-0694">RNA-binding</keyword>
<keyword id="KW-0699">rRNA-binding</keyword>
<proteinExistence type="inferred from homology"/>
<feature type="chain" id="PRO_0000294923" description="Small ribosomal subunit protein uS11c">
    <location>
        <begin position="1"/>
        <end position="138"/>
    </location>
</feature>
<feature type="region of interest" description="Disordered" evidence="2">
    <location>
        <begin position="1"/>
        <end position="23"/>
    </location>
</feature>
<feature type="compositionally biased region" description="Basic residues" evidence="2">
    <location>
        <begin position="9"/>
        <end position="23"/>
    </location>
</feature>
<evidence type="ECO:0000255" key="1">
    <source>
        <dbReference type="HAMAP-Rule" id="MF_01310"/>
    </source>
</evidence>
<evidence type="ECO:0000256" key="2">
    <source>
        <dbReference type="SAM" id="MobiDB-lite"/>
    </source>
</evidence>
<evidence type="ECO:0000305" key="3"/>
<geneLocation type="chloroplast"/>
<reference key="1">
    <citation type="submission" date="2007-03" db="EMBL/GenBank/DDBJ databases">
        <title>Sequence analysis of Arabidopsis pumila JS2 chloroplast DNA.</title>
        <authorList>
            <person name="Hosouchi T."/>
            <person name="Tsuruoka H."/>
            <person name="Kotani H."/>
        </authorList>
    </citation>
    <scope>NUCLEOTIDE SEQUENCE [LARGE SCALE GENOMIC DNA]</scope>
</reference>
<protein>
    <recommendedName>
        <fullName evidence="1">Small ribosomal subunit protein uS11c</fullName>
    </recommendedName>
    <alternativeName>
        <fullName evidence="3">30S ribosomal protein S11, chloroplastic</fullName>
    </alternativeName>
</protein>
<organism>
    <name type="scientific">Olimarabidopsis pumila</name>
    <name type="common">Dwarf rocket</name>
    <name type="synonym">Arabidopsis griffithiana</name>
    <dbReference type="NCBI Taxonomy" id="74718"/>
    <lineage>
        <taxon>Eukaryota</taxon>
        <taxon>Viridiplantae</taxon>
        <taxon>Streptophyta</taxon>
        <taxon>Embryophyta</taxon>
        <taxon>Tracheophyta</taxon>
        <taxon>Spermatophyta</taxon>
        <taxon>Magnoliopsida</taxon>
        <taxon>eudicotyledons</taxon>
        <taxon>Gunneridae</taxon>
        <taxon>Pentapetalae</taxon>
        <taxon>rosids</taxon>
        <taxon>malvids</taxon>
        <taxon>Brassicales</taxon>
        <taxon>Brassicaceae</taxon>
        <taxon>Alyssopsideae</taxon>
        <taxon>Olimarabidopsis</taxon>
    </lineage>
</organism>